<evidence type="ECO:0000250" key="1"/>
<evidence type="ECO:0000255" key="2">
    <source>
        <dbReference type="PROSITE-ProRule" id="PRU00805"/>
    </source>
</evidence>
<evidence type="ECO:0000305" key="3"/>
<evidence type="ECO:0000305" key="4">
    <source>
    </source>
</evidence>
<evidence type="ECO:0000305" key="5">
    <source>
    </source>
</evidence>
<name>EFE_PSESG</name>
<keyword id="KW-0223">Dioxygenase</keyword>
<keyword id="KW-0903">Direct protein sequencing</keyword>
<keyword id="KW-0266">Ethylene biosynthesis</keyword>
<keyword id="KW-0408">Iron</keyword>
<keyword id="KW-0479">Metal-binding</keyword>
<keyword id="KW-0560">Oxidoreductase</keyword>
<keyword id="KW-0614">Plasmid</keyword>
<dbReference type="EC" id="1.13.12.19"/>
<dbReference type="EC" id="1.14.20.7"/>
<dbReference type="EMBL" id="AF101057">
    <property type="protein sequence ID" value="AAD16439.1"/>
    <property type="molecule type" value="Genomic_DNA"/>
</dbReference>
<dbReference type="RefSeq" id="WP_004661945.1">
    <property type="nucleotide sequence ID" value="NZ_RBVH01000146.1"/>
</dbReference>
<dbReference type="SMR" id="Q7BS32"/>
<dbReference type="BRENDA" id="1.13.12.19">
    <property type="organism ID" value="14461"/>
</dbReference>
<dbReference type="UniPathway" id="UPA00385"/>
<dbReference type="GO" id="GO:0102276">
    <property type="term" value="F:2-oxoglutarate oxygenase/decarboxylase (ethylene-forming) activity"/>
    <property type="evidence" value="ECO:0007669"/>
    <property type="project" value="UniProtKB-EC"/>
</dbReference>
<dbReference type="GO" id="GO:0051213">
    <property type="term" value="F:dioxygenase activity"/>
    <property type="evidence" value="ECO:0007669"/>
    <property type="project" value="UniProtKB-KW"/>
</dbReference>
<dbReference type="GO" id="GO:0046872">
    <property type="term" value="F:metal ion binding"/>
    <property type="evidence" value="ECO:0007669"/>
    <property type="project" value="UniProtKB-KW"/>
</dbReference>
<dbReference type="GO" id="GO:0009693">
    <property type="term" value="P:ethylene biosynthetic process"/>
    <property type="evidence" value="ECO:0007669"/>
    <property type="project" value="UniProtKB-UniPathway"/>
</dbReference>
<dbReference type="Gene3D" id="2.60.120.330">
    <property type="entry name" value="B-lactam Antibiotic, Isopenicillin N Synthase, Chain"/>
    <property type="match status" value="1"/>
</dbReference>
<dbReference type="InterPro" id="IPR026992">
    <property type="entry name" value="DIOX_N"/>
</dbReference>
<dbReference type="InterPro" id="IPR044861">
    <property type="entry name" value="IPNS-like_FE2OG_OXY"/>
</dbReference>
<dbReference type="InterPro" id="IPR027443">
    <property type="entry name" value="IPNS-like_sf"/>
</dbReference>
<dbReference type="InterPro" id="IPR050231">
    <property type="entry name" value="Iron_ascorbate_oxido_reductase"/>
</dbReference>
<dbReference type="InterPro" id="IPR005123">
    <property type="entry name" value="Oxoglu/Fe-dep_dioxygenase_dom"/>
</dbReference>
<dbReference type="PANTHER" id="PTHR47990">
    <property type="entry name" value="2-OXOGLUTARATE (2OG) AND FE(II)-DEPENDENT OXYGENASE SUPERFAMILY PROTEIN-RELATED"/>
    <property type="match status" value="1"/>
</dbReference>
<dbReference type="Pfam" id="PF03171">
    <property type="entry name" value="2OG-FeII_Oxy"/>
    <property type="match status" value="1"/>
</dbReference>
<dbReference type="Pfam" id="PF14226">
    <property type="entry name" value="DIOX_N"/>
    <property type="match status" value="1"/>
</dbReference>
<dbReference type="SUPFAM" id="SSF51197">
    <property type="entry name" value="Clavaminate synthase-like"/>
    <property type="match status" value="1"/>
</dbReference>
<dbReference type="PROSITE" id="PS51471">
    <property type="entry name" value="FE2OG_OXY"/>
    <property type="match status" value="1"/>
</dbReference>
<sequence length="350" mass="39376">MTNLQTFELPTEVTGCAADISLGRALIQAWQKDGIFQIKTDSEQDRKTQEAMAASKQFCKEPLTFKSSCVSDLTYSGYVASGEEVTAGKPDFPEIFTVCKDLSVGDQRVKAGWPCHGPVPWPNNTYQKSMKTFMEELGLAGERLLKLTALGFELPINTFTDLTRDGWHHMRVLRFPPQTSTLSRGIGAHTDYGLLVIAAQDDVGGLYIRPPVEGEKRNRNWLPGESSAGMFEHDEPWTFVTPTPGVWTVFPGDILQFMTGGQLLSTPHKVKLNTRERFACAYFHEPNFEASAYPLFEPSANERIHYGEHFTNMFMRCYPDRITTQSINKENRLAHLEDLKKYSDTRATGS</sequence>
<feature type="chain" id="PRO_0000067276" description="2-oxoglutarate-dependent ethylene/succinate-forming enzyme">
    <location>
        <begin position="1"/>
        <end position="350"/>
    </location>
</feature>
<feature type="domain" description="Fe2OG dioxygenase" evidence="2">
    <location>
        <begin position="166"/>
        <end position="286"/>
    </location>
</feature>
<feature type="binding site" evidence="2">
    <location>
        <position position="189"/>
    </location>
    <ligand>
        <name>Fe cation</name>
        <dbReference type="ChEBI" id="CHEBI:24875"/>
    </ligand>
</feature>
<feature type="binding site" evidence="2">
    <location>
        <position position="268"/>
    </location>
    <ligand>
        <name>Fe cation</name>
        <dbReference type="ChEBI" id="CHEBI:24875"/>
    </ligand>
</feature>
<feature type="sequence conflict" description="In Ref. 2; AA sequence." evidence="3" ref="2">
    <original>W</original>
    <variation>K</variation>
    <location>
        <position position="30"/>
    </location>
</feature>
<reference key="1">
    <citation type="journal article" date="1999" name="Phytopathology">
        <title>Comparison of ethylene production by Pseudomonas syringae and Ralstonia solanacearum.</title>
        <authorList>
            <person name="Weingart H."/>
            <person name="Voelksch B."/>
            <person name="Ullrich M.S."/>
        </authorList>
        <dbReference type="AGRICOLA" id="IND22019584"/>
    </citation>
    <scope>NUCLEOTIDE SEQUENCE [GENOMIC DNA]</scope>
    <source>
        <strain>7a/90</strain>
    </source>
</reference>
<reference key="2">
    <citation type="journal article" date="1994" name="Microbiology">
        <title>Ethylene production by strains of the plant-pathogenic bacterium Pseudomonas syringae depends upon the presence of indigenous plasmids carrying homologous genes for the ethylene-forming enzyme.</title>
        <authorList>
            <person name="Nagahama K."/>
            <person name="Yoshino K."/>
            <person name="Matsuoka M."/>
            <person name="Sato M."/>
            <person name="Tanase S."/>
            <person name="Ogawa T."/>
            <person name="Fukuda H."/>
        </authorList>
    </citation>
    <scope>PROTEIN SEQUENCE OF 1-30</scope>
    <source>
        <strain>KN130</strain>
    </source>
</reference>
<protein>
    <recommendedName>
        <fullName>2-oxoglutarate-dependent ethylene/succinate-forming enzyme</fullName>
        <shortName>EFE</shortName>
        <shortName>Ethylene-forming enzyme</shortName>
        <ecNumber>1.13.12.19</ecNumber>
        <ecNumber>1.14.20.7</ecNumber>
    </recommendedName>
    <alternativeName>
        <fullName>2-oxoglutarate dioxygenase (ethylene-forming)</fullName>
    </alternativeName>
    <alternativeName>
        <fullName>2-oxoglutarate/L-arginine monooxygenase/decarboxylase (succinate-forming)</fullName>
    </alternativeName>
</protein>
<comment type="function">
    <text evidence="1">Simultaneously catalyzes two reactions, namely formation of ethylene and of succinate from 2-oxoglutarate.</text>
</comment>
<comment type="catalytic activity">
    <reaction>
        <text>2-oxoglutarate + O2 + 2 H(+) = ethene + 3 CO2 + H2O</text>
        <dbReference type="Rhea" id="RHEA:31523"/>
        <dbReference type="ChEBI" id="CHEBI:15377"/>
        <dbReference type="ChEBI" id="CHEBI:15378"/>
        <dbReference type="ChEBI" id="CHEBI:15379"/>
        <dbReference type="ChEBI" id="CHEBI:16526"/>
        <dbReference type="ChEBI" id="CHEBI:16810"/>
        <dbReference type="ChEBI" id="CHEBI:18153"/>
        <dbReference type="EC" id="1.13.12.19"/>
    </reaction>
</comment>
<comment type="catalytic activity">
    <reaction>
        <text>L-arginine + 2-oxoglutarate + O2 = guanidine + L-glutamate 5-semialdehyde + succinate + CO2</text>
        <dbReference type="Rhea" id="RHEA:31535"/>
        <dbReference type="ChEBI" id="CHEBI:15379"/>
        <dbReference type="ChEBI" id="CHEBI:16526"/>
        <dbReference type="ChEBI" id="CHEBI:16810"/>
        <dbReference type="ChEBI" id="CHEBI:30031"/>
        <dbReference type="ChEBI" id="CHEBI:30087"/>
        <dbReference type="ChEBI" id="CHEBI:32682"/>
        <dbReference type="ChEBI" id="CHEBI:58066"/>
        <dbReference type="EC" id="1.14.20.7"/>
    </reaction>
</comment>
<comment type="cofactor">
    <cofactor evidence="1">
        <name>Fe(2+)</name>
        <dbReference type="ChEBI" id="CHEBI:29033"/>
    </cofactor>
</comment>
<comment type="pathway">
    <text>Alkene biosynthesis; ethylene biosynthesis via 2-oxoglutarate.</text>
</comment>
<comment type="subunit">
    <text evidence="1">Monomer.</text>
</comment>
<comment type="miscellaneous">
    <text>A dual-circuit mechanism has been proposed in P.syringae pv phaseolicola for the complete reaction, in which the binding of L-arginine and 2-oxoglutarate in a Schiff-base structure generates a common intermediate for the two reactions.</text>
</comment>
<comment type="miscellaneous">
    <text evidence="4 5">Encoded on an unnamed plasmid.</text>
</comment>
<comment type="similarity">
    <text evidence="3">Belongs to the iron/ascorbate-dependent oxidoreductase family.</text>
</comment>
<geneLocation type="plasmid"/>
<organism>
    <name type="scientific">Pseudomonas savastanoi pv. glycinea</name>
    <name type="common">Pseudomonas syringae pv. glycinea</name>
    <dbReference type="NCBI Taxonomy" id="318"/>
    <lineage>
        <taxon>Bacteria</taxon>
        <taxon>Pseudomonadati</taxon>
        <taxon>Pseudomonadota</taxon>
        <taxon>Gammaproteobacteria</taxon>
        <taxon>Pseudomonadales</taxon>
        <taxon>Pseudomonadaceae</taxon>
        <taxon>Pseudomonas</taxon>
    </lineage>
</organism>
<accession>Q7BS32</accession>
<proteinExistence type="evidence at protein level"/>
<gene>
    <name type="primary">efe</name>
</gene>